<name>MTD_METS3</name>
<dbReference type="EC" id="1.5.98.1" evidence="1"/>
<dbReference type="EMBL" id="CP000678">
    <property type="protein sequence ID" value="ABQ87409.1"/>
    <property type="molecule type" value="Genomic_DNA"/>
</dbReference>
<dbReference type="RefSeq" id="WP_011954353.1">
    <property type="nucleotide sequence ID" value="NZ_CP117965.1"/>
</dbReference>
<dbReference type="SMR" id="A5UMI1"/>
<dbReference type="STRING" id="420247.Msm_1204"/>
<dbReference type="EnsemblBacteria" id="ABQ87409">
    <property type="protein sequence ID" value="ABQ87409"/>
    <property type="gene ID" value="Msm_1204"/>
</dbReference>
<dbReference type="KEGG" id="msi:Msm_1204"/>
<dbReference type="PATRIC" id="fig|420247.28.peg.1203"/>
<dbReference type="eggNOG" id="arCOG04382">
    <property type="taxonomic scope" value="Archaea"/>
</dbReference>
<dbReference type="HOGENOM" id="CLU_1006890_0_0_2"/>
<dbReference type="BRENDA" id="1.5.98.1">
    <property type="organism ID" value="11234"/>
</dbReference>
<dbReference type="UniPathway" id="UPA00640">
    <property type="reaction ID" value="UER00695"/>
</dbReference>
<dbReference type="Proteomes" id="UP000001992">
    <property type="component" value="Chromosome"/>
</dbReference>
<dbReference type="GO" id="GO:0008901">
    <property type="term" value="F:ferredoxin hydrogenase activity"/>
    <property type="evidence" value="ECO:0007669"/>
    <property type="project" value="InterPro"/>
</dbReference>
<dbReference type="GO" id="GO:0030268">
    <property type="term" value="F:methylenetetrahydromethanopterin dehydrogenase activity"/>
    <property type="evidence" value="ECO:0007669"/>
    <property type="project" value="UniProtKB-UniRule"/>
</dbReference>
<dbReference type="GO" id="GO:0019386">
    <property type="term" value="P:methanogenesis, from carbon dioxide"/>
    <property type="evidence" value="ECO:0007669"/>
    <property type="project" value="UniProtKB-UniRule"/>
</dbReference>
<dbReference type="GO" id="GO:0006730">
    <property type="term" value="P:one-carbon metabolic process"/>
    <property type="evidence" value="ECO:0007669"/>
    <property type="project" value="UniProtKB-UniRule"/>
</dbReference>
<dbReference type="Gene3D" id="6.10.140.120">
    <property type="match status" value="1"/>
</dbReference>
<dbReference type="Gene3D" id="3.40.50.10830">
    <property type="entry name" value="F420-dependent methylenetetrahydromethanopterin dehydrogenase (MTD)"/>
    <property type="match status" value="1"/>
</dbReference>
<dbReference type="HAMAP" id="MF_00058">
    <property type="entry name" value="MTD"/>
    <property type="match status" value="1"/>
</dbReference>
<dbReference type="InterPro" id="IPR002844">
    <property type="entry name" value="MTD"/>
</dbReference>
<dbReference type="InterPro" id="IPR036080">
    <property type="entry name" value="MTD_sf"/>
</dbReference>
<dbReference type="NCBIfam" id="NF002162">
    <property type="entry name" value="PRK00994.1"/>
    <property type="match status" value="1"/>
</dbReference>
<dbReference type="Pfam" id="PF01993">
    <property type="entry name" value="MTD"/>
    <property type="match status" value="1"/>
</dbReference>
<dbReference type="PIRSF" id="PIRSF005627">
    <property type="entry name" value="MTD"/>
    <property type="match status" value="1"/>
</dbReference>
<dbReference type="SUPFAM" id="SSF102324">
    <property type="entry name" value="F420-dependent methylenetetrahydromethanopterin dehydrogenase (MTD)"/>
    <property type="match status" value="1"/>
</dbReference>
<accession>A5UMI1</accession>
<proteinExistence type="inferred from homology"/>
<feature type="chain" id="PRO_1000117814" description="F420-dependent methylenetetrahydromethanopterin dehydrogenase">
    <location>
        <begin position="1"/>
        <end position="275"/>
    </location>
</feature>
<reference key="1">
    <citation type="journal article" date="2007" name="Proc. Natl. Acad. Sci. U.S.A.">
        <title>Genomic and metabolic adaptations of Methanobrevibacter smithii to the human gut.</title>
        <authorList>
            <person name="Samuel B.S."/>
            <person name="Hansen E.E."/>
            <person name="Manchester J.K."/>
            <person name="Coutinho P.M."/>
            <person name="Henrissat B."/>
            <person name="Fulton R."/>
            <person name="Latreille P."/>
            <person name="Kim K."/>
            <person name="Wilson R.K."/>
            <person name="Gordon J.I."/>
        </authorList>
    </citation>
    <scope>NUCLEOTIDE SEQUENCE [LARGE SCALE GENOMIC DNA]</scope>
    <source>
        <strain>ATCC 35061 / DSM 861 / OCM 144 / PS</strain>
    </source>
</reference>
<organism>
    <name type="scientific">Methanobrevibacter smithii (strain ATCC 35061 / DSM 861 / OCM 144 / PS)</name>
    <dbReference type="NCBI Taxonomy" id="420247"/>
    <lineage>
        <taxon>Archaea</taxon>
        <taxon>Methanobacteriati</taxon>
        <taxon>Methanobacteriota</taxon>
        <taxon>Methanomada group</taxon>
        <taxon>Methanobacteria</taxon>
        <taxon>Methanobacteriales</taxon>
        <taxon>Methanobacteriaceae</taxon>
        <taxon>Methanobrevibacter</taxon>
    </lineage>
</organism>
<keyword id="KW-0484">Methanogenesis</keyword>
<keyword id="KW-0554">One-carbon metabolism</keyword>
<keyword id="KW-0560">Oxidoreductase</keyword>
<protein>
    <recommendedName>
        <fullName evidence="1">F420-dependent methylenetetrahydromethanopterin dehydrogenase</fullName>
        <shortName evidence="1">MTD</shortName>
        <ecNumber evidence="1">1.5.98.1</ecNumber>
    </recommendedName>
    <alternativeName>
        <fullName evidence="1">Coenzyme F420-dependent N5,N10-methylenetetrahydromethanopterin dehydrogenase</fullName>
    </alternativeName>
</protein>
<gene>
    <name evidence="1" type="primary">mtd</name>
    <name type="ordered locus">Msm_1204</name>
</gene>
<evidence type="ECO:0000255" key="1">
    <source>
        <dbReference type="HAMAP-Rule" id="MF_00058"/>
    </source>
</evidence>
<sequence length="275" mass="29231">MVVKIGIIKSGNIGTSPVLDLLLDERADRPNIDVRVFGSGAKMNPEQVEDVVPKVDQFDPDFCIFISPNPGAPGPAKARELLSEKDIPAIIIGDAPGKGKKDEMDEQGLGYIIVMSDPMIGAKREWLDPTEMAIFNADILKVLAETGALRLVQNTIDGVIDGAAAGNIELPKLIITAEKAVEAAGFENPYAKAKAIAAYEMAGAVANLDMKGCFMTKGFENFIPLVAAAHEMAASAAALADEAREIEKGNDSVLRTPHMKEGNTGCKTDLISKPE</sequence>
<comment type="function">
    <text evidence="1">Catalyzes the reversible reduction of methenyl-H(4)MPT(+) to methylene-H(4)MPT.</text>
</comment>
<comment type="catalytic activity">
    <reaction evidence="1">
        <text>5,10-methylenetetrahydromethanopterin + oxidized coenzyme F420-(gamma-L-Glu)(n) + 2 H(+) = 5,10-methenyl-5,6,7,8-tetrahydromethanopterin + reduced coenzyme F420-(gamma-L-Glu)(n)</text>
        <dbReference type="Rhea" id="RHEA:16721"/>
        <dbReference type="Rhea" id="RHEA-COMP:12939"/>
        <dbReference type="Rhea" id="RHEA-COMP:14378"/>
        <dbReference type="ChEBI" id="CHEBI:15378"/>
        <dbReference type="ChEBI" id="CHEBI:57818"/>
        <dbReference type="ChEBI" id="CHEBI:58337"/>
        <dbReference type="ChEBI" id="CHEBI:133980"/>
        <dbReference type="ChEBI" id="CHEBI:139511"/>
        <dbReference type="EC" id="1.5.98.1"/>
    </reaction>
</comment>
<comment type="pathway">
    <text evidence="1">One-carbon metabolism; methanogenesis from CO(2); 5,10-methylene-5,6,7,8-tetrahydromethanopterin from 5,10-methenyl-5,6,7,8-tetrahydromethanopterin (coenzyme F420 route): step 1/1.</text>
</comment>
<comment type="similarity">
    <text evidence="1">Belongs to the MTD family.</text>
</comment>